<sequence length="372" mass="41205">MNFELLATDGKARRGRLTFPRGVVETPAFMPVGTYGTVKGMLPRDIEDIGAQIILGNTFHLWLRPGTEVIQRHGDLHDFMQWKGPILTDSGGFQVFSLGAMRKIKEEGVTFASPVDGAKVFMGPEESMAVQRALGSDIVMIFDECTPYPADHDVAKRSMELSLRWAKRSKIAHGDSPSALFGIVQGGMHEDLRLRSLDGLQEIGFDGLAIGGLSVGEPKEEMIRVLDFLPPQMPADKPRYLMGVGKPEDLVEGVRRGVDMFDCVMPTRNARNGHLFVDSGVIKIRNSVHKHDDSTLDPTCDCYTCKHFSRAYLHHLDKCGEMLGSMLNTIHNLRHYQRVMAGLREAIQQGTLAAFVDAFYAKRGLPTPPLDA</sequence>
<proteinExistence type="inferred from homology"/>
<organism>
    <name type="scientific">Pseudomonas aeruginosa (strain LESB58)</name>
    <dbReference type="NCBI Taxonomy" id="557722"/>
    <lineage>
        <taxon>Bacteria</taxon>
        <taxon>Pseudomonadati</taxon>
        <taxon>Pseudomonadota</taxon>
        <taxon>Gammaproteobacteria</taxon>
        <taxon>Pseudomonadales</taxon>
        <taxon>Pseudomonadaceae</taxon>
        <taxon>Pseudomonas</taxon>
    </lineage>
</organism>
<evidence type="ECO:0000255" key="1">
    <source>
        <dbReference type="HAMAP-Rule" id="MF_00168"/>
    </source>
</evidence>
<dbReference type="EC" id="2.4.2.29" evidence="1"/>
<dbReference type="EMBL" id="FM209186">
    <property type="protein sequence ID" value="CAW25878.1"/>
    <property type="molecule type" value="Genomic_DNA"/>
</dbReference>
<dbReference type="RefSeq" id="WP_003100607.1">
    <property type="nucleotide sequence ID" value="NC_011770.1"/>
</dbReference>
<dbReference type="SMR" id="B7UVU4"/>
<dbReference type="KEGG" id="pag:PLES_11511"/>
<dbReference type="HOGENOM" id="CLU_022060_0_1_6"/>
<dbReference type="UniPathway" id="UPA00392"/>
<dbReference type="GO" id="GO:0005829">
    <property type="term" value="C:cytosol"/>
    <property type="evidence" value="ECO:0007669"/>
    <property type="project" value="TreeGrafter"/>
</dbReference>
<dbReference type="GO" id="GO:0046872">
    <property type="term" value="F:metal ion binding"/>
    <property type="evidence" value="ECO:0007669"/>
    <property type="project" value="UniProtKB-KW"/>
</dbReference>
<dbReference type="GO" id="GO:0008479">
    <property type="term" value="F:tRNA-guanosine(34) queuine transglycosylase activity"/>
    <property type="evidence" value="ECO:0007669"/>
    <property type="project" value="UniProtKB-UniRule"/>
</dbReference>
<dbReference type="GO" id="GO:0008616">
    <property type="term" value="P:queuosine biosynthetic process"/>
    <property type="evidence" value="ECO:0007669"/>
    <property type="project" value="UniProtKB-UniRule"/>
</dbReference>
<dbReference type="GO" id="GO:0002099">
    <property type="term" value="P:tRNA wobble guanine modification"/>
    <property type="evidence" value="ECO:0007669"/>
    <property type="project" value="TreeGrafter"/>
</dbReference>
<dbReference type="GO" id="GO:0101030">
    <property type="term" value="P:tRNA-guanine transglycosylation"/>
    <property type="evidence" value="ECO:0007669"/>
    <property type="project" value="InterPro"/>
</dbReference>
<dbReference type="FunFam" id="3.20.20.105:FF:000001">
    <property type="entry name" value="Queuine tRNA-ribosyltransferase"/>
    <property type="match status" value="1"/>
</dbReference>
<dbReference type="Gene3D" id="3.20.20.105">
    <property type="entry name" value="Queuine tRNA-ribosyltransferase-like"/>
    <property type="match status" value="1"/>
</dbReference>
<dbReference type="HAMAP" id="MF_00168">
    <property type="entry name" value="Q_tRNA_Tgt"/>
    <property type="match status" value="1"/>
</dbReference>
<dbReference type="InterPro" id="IPR050076">
    <property type="entry name" value="ArchSynthase1/Queuine_TRR"/>
</dbReference>
<dbReference type="InterPro" id="IPR004803">
    <property type="entry name" value="TGT"/>
</dbReference>
<dbReference type="InterPro" id="IPR036511">
    <property type="entry name" value="TGT-like_sf"/>
</dbReference>
<dbReference type="InterPro" id="IPR002616">
    <property type="entry name" value="tRNA_ribo_trans-like"/>
</dbReference>
<dbReference type="NCBIfam" id="TIGR00430">
    <property type="entry name" value="Q_tRNA_tgt"/>
    <property type="match status" value="1"/>
</dbReference>
<dbReference type="NCBIfam" id="TIGR00449">
    <property type="entry name" value="tgt_general"/>
    <property type="match status" value="1"/>
</dbReference>
<dbReference type="PANTHER" id="PTHR46499">
    <property type="entry name" value="QUEUINE TRNA-RIBOSYLTRANSFERASE"/>
    <property type="match status" value="1"/>
</dbReference>
<dbReference type="PANTHER" id="PTHR46499:SF1">
    <property type="entry name" value="QUEUINE TRNA-RIBOSYLTRANSFERASE"/>
    <property type="match status" value="1"/>
</dbReference>
<dbReference type="Pfam" id="PF01702">
    <property type="entry name" value="TGT"/>
    <property type="match status" value="1"/>
</dbReference>
<dbReference type="SUPFAM" id="SSF51713">
    <property type="entry name" value="tRNA-guanine transglycosylase"/>
    <property type="match status" value="1"/>
</dbReference>
<name>TGT_PSEA8</name>
<reference key="1">
    <citation type="journal article" date="2009" name="Genome Res.">
        <title>Newly introduced genomic prophage islands are critical determinants of in vivo competitiveness in the Liverpool epidemic strain of Pseudomonas aeruginosa.</title>
        <authorList>
            <person name="Winstanley C."/>
            <person name="Langille M.G.I."/>
            <person name="Fothergill J.L."/>
            <person name="Kukavica-Ibrulj I."/>
            <person name="Paradis-Bleau C."/>
            <person name="Sanschagrin F."/>
            <person name="Thomson N.R."/>
            <person name="Winsor G.L."/>
            <person name="Quail M.A."/>
            <person name="Lennard N."/>
            <person name="Bignell A."/>
            <person name="Clarke L."/>
            <person name="Seeger K."/>
            <person name="Saunders D."/>
            <person name="Harris D."/>
            <person name="Parkhill J."/>
            <person name="Hancock R.E.W."/>
            <person name="Brinkman F.S.L."/>
            <person name="Levesque R.C."/>
        </authorList>
    </citation>
    <scope>NUCLEOTIDE SEQUENCE [LARGE SCALE GENOMIC DNA]</scope>
    <source>
        <strain>LESB58</strain>
    </source>
</reference>
<comment type="function">
    <text evidence="1">Catalyzes the base-exchange of a guanine (G) residue with the queuine precursor 7-aminomethyl-7-deazaguanine (PreQ1) at position 34 (anticodon wobble position) in tRNAs with GU(N) anticodons (tRNA-Asp, -Asn, -His and -Tyr). Catalysis occurs through a double-displacement mechanism. The nucleophile active site attacks the C1' of nucleotide 34 to detach the guanine base from the RNA, forming a covalent enzyme-RNA intermediate. The proton acceptor active site deprotonates the incoming PreQ1, allowing a nucleophilic attack on the C1' of the ribose to form the product. After dissociation, two additional enzymatic reactions on the tRNA convert PreQ1 to queuine (Q), resulting in the hypermodified nucleoside queuosine (7-(((4,5-cis-dihydroxy-2-cyclopenten-1-yl)amino)methyl)-7-deazaguanosine).</text>
</comment>
<comment type="catalytic activity">
    <reaction evidence="1">
        <text>7-aminomethyl-7-carbaguanine + guanosine(34) in tRNA = 7-aminomethyl-7-carbaguanosine(34) in tRNA + guanine</text>
        <dbReference type="Rhea" id="RHEA:24104"/>
        <dbReference type="Rhea" id="RHEA-COMP:10341"/>
        <dbReference type="Rhea" id="RHEA-COMP:10342"/>
        <dbReference type="ChEBI" id="CHEBI:16235"/>
        <dbReference type="ChEBI" id="CHEBI:58703"/>
        <dbReference type="ChEBI" id="CHEBI:74269"/>
        <dbReference type="ChEBI" id="CHEBI:82833"/>
        <dbReference type="EC" id="2.4.2.29"/>
    </reaction>
</comment>
<comment type="cofactor">
    <cofactor evidence="1">
        <name>Zn(2+)</name>
        <dbReference type="ChEBI" id="CHEBI:29105"/>
    </cofactor>
    <text evidence="1">Binds 1 zinc ion per subunit.</text>
</comment>
<comment type="pathway">
    <text evidence="1">tRNA modification; tRNA-queuosine biosynthesis.</text>
</comment>
<comment type="subunit">
    <text evidence="1">Homodimer. Within each dimer, one monomer is responsible for RNA recognition and catalysis, while the other monomer binds to the replacement base PreQ1.</text>
</comment>
<comment type="similarity">
    <text evidence="1">Belongs to the queuine tRNA-ribosyltransferase family.</text>
</comment>
<protein>
    <recommendedName>
        <fullName evidence="1">Queuine tRNA-ribosyltransferase</fullName>
        <ecNumber evidence="1">2.4.2.29</ecNumber>
    </recommendedName>
    <alternativeName>
        <fullName evidence="1">Guanine insertion enzyme</fullName>
    </alternativeName>
    <alternativeName>
        <fullName evidence="1">tRNA-guanine transglycosylase</fullName>
    </alternativeName>
</protein>
<accession>B7UVU4</accession>
<gene>
    <name evidence="1" type="primary">tgt</name>
    <name type="ordered locus">PLES_11511</name>
</gene>
<feature type="chain" id="PRO_1000198019" description="Queuine tRNA-ribosyltransferase">
    <location>
        <begin position="1"/>
        <end position="372"/>
    </location>
</feature>
<feature type="region of interest" description="RNA binding" evidence="1">
    <location>
        <begin position="243"/>
        <end position="249"/>
    </location>
</feature>
<feature type="region of interest" description="RNA binding; important for wobble base 34 recognition" evidence="1">
    <location>
        <begin position="267"/>
        <end position="271"/>
    </location>
</feature>
<feature type="active site" description="Proton acceptor" evidence="1">
    <location>
        <position position="89"/>
    </location>
</feature>
<feature type="active site" description="Nucleophile" evidence="1">
    <location>
        <position position="262"/>
    </location>
</feature>
<feature type="binding site" evidence="1">
    <location>
        <begin position="89"/>
        <end position="93"/>
    </location>
    <ligand>
        <name>substrate</name>
    </ligand>
</feature>
<feature type="binding site" evidence="1">
    <location>
        <position position="143"/>
    </location>
    <ligand>
        <name>substrate</name>
    </ligand>
</feature>
<feature type="binding site" evidence="1">
    <location>
        <position position="185"/>
    </location>
    <ligand>
        <name>substrate</name>
    </ligand>
</feature>
<feature type="binding site" evidence="1">
    <location>
        <position position="212"/>
    </location>
    <ligand>
        <name>substrate</name>
    </ligand>
</feature>
<feature type="binding site" evidence="1">
    <location>
        <position position="300"/>
    </location>
    <ligand>
        <name>Zn(2+)</name>
        <dbReference type="ChEBI" id="CHEBI:29105"/>
    </ligand>
</feature>
<feature type="binding site" evidence="1">
    <location>
        <position position="302"/>
    </location>
    <ligand>
        <name>Zn(2+)</name>
        <dbReference type="ChEBI" id="CHEBI:29105"/>
    </ligand>
</feature>
<feature type="binding site" evidence="1">
    <location>
        <position position="305"/>
    </location>
    <ligand>
        <name>Zn(2+)</name>
        <dbReference type="ChEBI" id="CHEBI:29105"/>
    </ligand>
</feature>
<feature type="binding site" evidence="1">
    <location>
        <position position="331"/>
    </location>
    <ligand>
        <name>Zn(2+)</name>
        <dbReference type="ChEBI" id="CHEBI:29105"/>
    </ligand>
</feature>
<keyword id="KW-0328">Glycosyltransferase</keyword>
<keyword id="KW-0479">Metal-binding</keyword>
<keyword id="KW-0671">Queuosine biosynthesis</keyword>
<keyword id="KW-0808">Transferase</keyword>
<keyword id="KW-0819">tRNA processing</keyword>
<keyword id="KW-0862">Zinc</keyword>